<gene>
    <name evidence="1" type="primary">hemA</name>
    <name type="ordered locus">Rcas_2026</name>
</gene>
<proteinExistence type="inferred from homology"/>
<evidence type="ECO:0000255" key="1">
    <source>
        <dbReference type="HAMAP-Rule" id="MF_00087"/>
    </source>
</evidence>
<accession>A7NKU4</accession>
<reference key="1">
    <citation type="submission" date="2007-08" db="EMBL/GenBank/DDBJ databases">
        <title>Complete sequence of Roseiflexus castenholzii DSM 13941.</title>
        <authorList>
            <consortium name="US DOE Joint Genome Institute"/>
            <person name="Copeland A."/>
            <person name="Lucas S."/>
            <person name="Lapidus A."/>
            <person name="Barry K."/>
            <person name="Glavina del Rio T."/>
            <person name="Dalin E."/>
            <person name="Tice H."/>
            <person name="Pitluck S."/>
            <person name="Thompson L.S."/>
            <person name="Brettin T."/>
            <person name="Bruce D."/>
            <person name="Detter J.C."/>
            <person name="Han C."/>
            <person name="Tapia R."/>
            <person name="Schmutz J."/>
            <person name="Larimer F."/>
            <person name="Land M."/>
            <person name="Hauser L."/>
            <person name="Kyrpides N."/>
            <person name="Mikhailova N."/>
            <person name="Bryant D.A."/>
            <person name="Hanada S."/>
            <person name="Tsukatani Y."/>
            <person name="Richardson P."/>
        </authorList>
    </citation>
    <scope>NUCLEOTIDE SEQUENCE [LARGE SCALE GENOMIC DNA]</scope>
    <source>
        <strain>DSM 13941 / HLO8</strain>
    </source>
</reference>
<organism>
    <name type="scientific">Roseiflexus castenholzii (strain DSM 13941 / HLO8)</name>
    <dbReference type="NCBI Taxonomy" id="383372"/>
    <lineage>
        <taxon>Bacteria</taxon>
        <taxon>Bacillati</taxon>
        <taxon>Chloroflexota</taxon>
        <taxon>Chloroflexia</taxon>
        <taxon>Chloroflexales</taxon>
        <taxon>Roseiflexineae</taxon>
        <taxon>Roseiflexaceae</taxon>
        <taxon>Roseiflexus</taxon>
    </lineage>
</organism>
<protein>
    <recommendedName>
        <fullName evidence="1">Glutamyl-tRNA reductase</fullName>
        <shortName evidence="1">GluTR</shortName>
        <ecNumber evidence="1">1.2.1.70</ecNumber>
    </recommendedName>
</protein>
<dbReference type="EC" id="1.2.1.70" evidence="1"/>
<dbReference type="EMBL" id="CP000804">
    <property type="protein sequence ID" value="ABU58114.1"/>
    <property type="molecule type" value="Genomic_DNA"/>
</dbReference>
<dbReference type="RefSeq" id="WP_012120538.1">
    <property type="nucleotide sequence ID" value="NC_009767.1"/>
</dbReference>
<dbReference type="SMR" id="A7NKU4"/>
<dbReference type="STRING" id="383372.Rcas_2026"/>
<dbReference type="KEGG" id="rca:Rcas_2026"/>
<dbReference type="eggNOG" id="COG0373">
    <property type="taxonomic scope" value="Bacteria"/>
</dbReference>
<dbReference type="HOGENOM" id="CLU_035113_2_2_0"/>
<dbReference type="OrthoDB" id="110209at2"/>
<dbReference type="UniPathway" id="UPA00251">
    <property type="reaction ID" value="UER00316"/>
</dbReference>
<dbReference type="UniPathway" id="UPA00668"/>
<dbReference type="Proteomes" id="UP000000263">
    <property type="component" value="Chromosome"/>
</dbReference>
<dbReference type="GO" id="GO:0008883">
    <property type="term" value="F:glutamyl-tRNA reductase activity"/>
    <property type="evidence" value="ECO:0007669"/>
    <property type="project" value="UniProtKB-UniRule"/>
</dbReference>
<dbReference type="GO" id="GO:0050661">
    <property type="term" value="F:NADP binding"/>
    <property type="evidence" value="ECO:0007669"/>
    <property type="project" value="InterPro"/>
</dbReference>
<dbReference type="GO" id="GO:0015995">
    <property type="term" value="P:chlorophyll biosynthetic process"/>
    <property type="evidence" value="ECO:0007669"/>
    <property type="project" value="UniProtKB-UniRule"/>
</dbReference>
<dbReference type="GO" id="GO:0019353">
    <property type="term" value="P:protoporphyrinogen IX biosynthetic process from glutamate"/>
    <property type="evidence" value="ECO:0007669"/>
    <property type="project" value="TreeGrafter"/>
</dbReference>
<dbReference type="CDD" id="cd05213">
    <property type="entry name" value="NAD_bind_Glutamyl_tRNA_reduct"/>
    <property type="match status" value="1"/>
</dbReference>
<dbReference type="FunFam" id="3.30.460.30:FF:000001">
    <property type="entry name" value="Glutamyl-tRNA reductase"/>
    <property type="match status" value="1"/>
</dbReference>
<dbReference type="FunFam" id="3.40.50.720:FF:000031">
    <property type="entry name" value="Glutamyl-tRNA reductase"/>
    <property type="match status" value="1"/>
</dbReference>
<dbReference type="Gene3D" id="3.30.460.30">
    <property type="entry name" value="Glutamyl-tRNA reductase, N-terminal domain"/>
    <property type="match status" value="1"/>
</dbReference>
<dbReference type="Gene3D" id="3.40.50.720">
    <property type="entry name" value="NAD(P)-binding Rossmann-like Domain"/>
    <property type="match status" value="1"/>
</dbReference>
<dbReference type="HAMAP" id="MF_00087">
    <property type="entry name" value="Glu_tRNA_reductase"/>
    <property type="match status" value="1"/>
</dbReference>
<dbReference type="InterPro" id="IPR000343">
    <property type="entry name" value="4pyrrol_synth_GluRdtase"/>
</dbReference>
<dbReference type="InterPro" id="IPR015896">
    <property type="entry name" value="4pyrrol_synth_GluRdtase_dimer"/>
</dbReference>
<dbReference type="InterPro" id="IPR015895">
    <property type="entry name" value="4pyrrol_synth_GluRdtase_N"/>
</dbReference>
<dbReference type="InterPro" id="IPR018214">
    <property type="entry name" value="GluRdtase_CS"/>
</dbReference>
<dbReference type="InterPro" id="IPR036453">
    <property type="entry name" value="GluRdtase_dimer_dom_sf"/>
</dbReference>
<dbReference type="InterPro" id="IPR036343">
    <property type="entry name" value="GluRdtase_N_sf"/>
</dbReference>
<dbReference type="InterPro" id="IPR036291">
    <property type="entry name" value="NAD(P)-bd_dom_sf"/>
</dbReference>
<dbReference type="InterPro" id="IPR006151">
    <property type="entry name" value="Shikm_DH/Glu-tRNA_Rdtase"/>
</dbReference>
<dbReference type="NCBIfam" id="TIGR01035">
    <property type="entry name" value="hemA"/>
    <property type="match status" value="1"/>
</dbReference>
<dbReference type="PANTHER" id="PTHR43013">
    <property type="entry name" value="GLUTAMYL-TRNA REDUCTASE"/>
    <property type="match status" value="1"/>
</dbReference>
<dbReference type="PANTHER" id="PTHR43013:SF1">
    <property type="entry name" value="GLUTAMYL-TRNA REDUCTASE"/>
    <property type="match status" value="1"/>
</dbReference>
<dbReference type="Pfam" id="PF00745">
    <property type="entry name" value="GlutR_dimer"/>
    <property type="match status" value="1"/>
</dbReference>
<dbReference type="Pfam" id="PF05201">
    <property type="entry name" value="GlutR_N"/>
    <property type="match status" value="1"/>
</dbReference>
<dbReference type="Pfam" id="PF01488">
    <property type="entry name" value="Shikimate_DH"/>
    <property type="match status" value="1"/>
</dbReference>
<dbReference type="PIRSF" id="PIRSF000445">
    <property type="entry name" value="4pyrrol_synth_GluRdtase"/>
    <property type="match status" value="1"/>
</dbReference>
<dbReference type="SUPFAM" id="SSF69742">
    <property type="entry name" value="Glutamyl tRNA-reductase catalytic, N-terminal domain"/>
    <property type="match status" value="1"/>
</dbReference>
<dbReference type="SUPFAM" id="SSF69075">
    <property type="entry name" value="Glutamyl tRNA-reductase dimerization domain"/>
    <property type="match status" value="1"/>
</dbReference>
<dbReference type="SUPFAM" id="SSF51735">
    <property type="entry name" value="NAD(P)-binding Rossmann-fold domains"/>
    <property type="match status" value="1"/>
</dbReference>
<dbReference type="PROSITE" id="PS00747">
    <property type="entry name" value="GLUTR"/>
    <property type="match status" value="1"/>
</dbReference>
<feature type="chain" id="PRO_1000075420" description="Glutamyl-tRNA reductase">
    <location>
        <begin position="1"/>
        <end position="425"/>
    </location>
</feature>
<feature type="active site" description="Nucleophile" evidence="1">
    <location>
        <position position="48"/>
    </location>
</feature>
<feature type="binding site" evidence="1">
    <location>
        <begin position="47"/>
        <end position="50"/>
    </location>
    <ligand>
        <name>substrate</name>
    </ligand>
</feature>
<feature type="binding site" evidence="1">
    <location>
        <position position="107"/>
    </location>
    <ligand>
        <name>substrate</name>
    </ligand>
</feature>
<feature type="binding site" evidence="1">
    <location>
        <begin position="112"/>
        <end position="114"/>
    </location>
    <ligand>
        <name>substrate</name>
    </ligand>
</feature>
<feature type="binding site" evidence="1">
    <location>
        <position position="118"/>
    </location>
    <ligand>
        <name>substrate</name>
    </ligand>
</feature>
<feature type="binding site" evidence="1">
    <location>
        <begin position="187"/>
        <end position="192"/>
    </location>
    <ligand>
        <name>NADP(+)</name>
        <dbReference type="ChEBI" id="CHEBI:58349"/>
    </ligand>
</feature>
<feature type="site" description="Important for activity" evidence="1">
    <location>
        <position position="97"/>
    </location>
</feature>
<name>HEM1_ROSCS</name>
<keyword id="KW-0149">Chlorophyll biosynthesis</keyword>
<keyword id="KW-0521">NADP</keyword>
<keyword id="KW-0560">Oxidoreductase</keyword>
<keyword id="KW-0627">Porphyrin biosynthesis</keyword>
<keyword id="KW-1185">Reference proteome</keyword>
<sequence>MHITLIGVHQRNTPVTVRERLAFSLRELPDALLALRRYVEEGIILSTCNRVEVCAVTHDSVGGDAALKSFLAEQRGVDQAVFVPSLYIYHNEAVVRHLYRLAAGLDSMVLGEDQIVGQIKEALAIAHASGAIGPVLHRVLHGALAAGKRARTHTGIASGHVSVVSVAIDALRQHADLLKQGRALVIGAGHMAELTLKHLIAEGCSAITVINRTETRASALAQRYGVAWRPWGDLSDALAMSDMVVSCTSAPGIVVSWQMVERAAVGRSVPLLLFDLAVPRDIDQRVVEIPGVHLYDVDALEPICVTNRAMRAAEAQRAEAIIDGEVAKFMEWWVAQQAVPTIRALRERAEAIRDAEIRRALARCPELSPQQRETVVALSTAIINKLLHEPIVALRDPEAGSELVSAVRRLFNIDDATVHPSAKVT</sequence>
<comment type="function">
    <text evidence="1">Catalyzes the NADPH-dependent reduction of glutamyl-tRNA(Glu) to glutamate 1-semialdehyde (GSA).</text>
</comment>
<comment type="catalytic activity">
    <reaction evidence="1">
        <text>(S)-4-amino-5-oxopentanoate + tRNA(Glu) + NADP(+) = L-glutamyl-tRNA(Glu) + NADPH + H(+)</text>
        <dbReference type="Rhea" id="RHEA:12344"/>
        <dbReference type="Rhea" id="RHEA-COMP:9663"/>
        <dbReference type="Rhea" id="RHEA-COMP:9680"/>
        <dbReference type="ChEBI" id="CHEBI:15378"/>
        <dbReference type="ChEBI" id="CHEBI:57501"/>
        <dbReference type="ChEBI" id="CHEBI:57783"/>
        <dbReference type="ChEBI" id="CHEBI:58349"/>
        <dbReference type="ChEBI" id="CHEBI:78442"/>
        <dbReference type="ChEBI" id="CHEBI:78520"/>
        <dbReference type="EC" id="1.2.1.70"/>
    </reaction>
</comment>
<comment type="pathway">
    <text evidence="1">Porphyrin-containing compound metabolism; protoporphyrin-IX biosynthesis; 5-aminolevulinate from L-glutamyl-tRNA(Glu): step 1/2.</text>
</comment>
<comment type="pathway">
    <text evidence="1">Porphyrin-containing compound metabolism; chlorophyll biosynthesis.</text>
</comment>
<comment type="subunit">
    <text evidence="1">Homodimer.</text>
</comment>
<comment type="domain">
    <text evidence="1">Possesses an unusual extended V-shaped dimeric structure with each monomer consisting of three distinct domains arranged along a curved 'spinal' alpha-helix. The N-terminal catalytic domain specifically recognizes the glutamate moiety of the substrate. The second domain is the NADPH-binding domain, and the third C-terminal domain is responsible for dimerization.</text>
</comment>
<comment type="miscellaneous">
    <text evidence="1">During catalysis, the active site Cys acts as a nucleophile attacking the alpha-carbonyl group of tRNA-bound glutamate with the formation of a thioester intermediate between enzyme and glutamate, and the concomitant release of tRNA(Glu). The thioester intermediate is finally reduced by direct hydride transfer from NADPH, to form the product GSA.</text>
</comment>
<comment type="similarity">
    <text evidence="1">Belongs to the glutamyl-tRNA reductase family.</text>
</comment>